<keyword id="KW-0249">Electron transport</keyword>
<keyword id="KW-0560">Oxidoreductase</keyword>
<keyword id="KW-0574">Periplasm</keyword>
<keyword id="KW-1185">Reference proteome</keyword>
<keyword id="KW-0732">Signal</keyword>
<keyword id="KW-0813">Transport</keyword>
<comment type="function">
    <text>Methylamine dehydrogenase carries out the oxidation of methylamine. Electrons are passed from methylamine dehydrogenase to amicyanin.</text>
</comment>
<comment type="catalytic activity">
    <reaction>
        <text>2 oxidized [amicyanin] + methylamine + H2O = 2 reduced [amicyanin] + formaldehyde + NH4(+) + 2 H(+)</text>
        <dbReference type="Rhea" id="RHEA:30207"/>
        <dbReference type="Rhea" id="RHEA-COMP:11100"/>
        <dbReference type="Rhea" id="RHEA-COMP:11101"/>
        <dbReference type="ChEBI" id="CHEBI:15377"/>
        <dbReference type="ChEBI" id="CHEBI:15378"/>
        <dbReference type="ChEBI" id="CHEBI:16842"/>
        <dbReference type="ChEBI" id="CHEBI:28938"/>
        <dbReference type="ChEBI" id="CHEBI:29036"/>
        <dbReference type="ChEBI" id="CHEBI:49552"/>
        <dbReference type="ChEBI" id="CHEBI:59338"/>
        <dbReference type="EC" id="1.4.9.1"/>
    </reaction>
</comment>
<comment type="subunit">
    <text>Tetramer of two light and two heavy chains.</text>
</comment>
<comment type="subcellular location">
    <subcellularLocation>
        <location>Periplasm</location>
    </subcellularLocation>
</comment>
<comment type="similarity">
    <text evidence="2">Belongs to the aromatic amine dehydrogenase heavy chain family.</text>
</comment>
<comment type="sequence caution" evidence="2">
    <conflict type="erroneous initiation">
        <sequence resource="EMBL-CDS" id="AAB46933"/>
    </conflict>
</comment>
<reference key="1">
    <citation type="journal article" date="1994" name="J. Bacteriol.">
        <title>Genetic organization of the mau gene cluster in Methylobacterium extorquens AM1: complete nucleotide sequence and generation and characteristics of mau mutants.</title>
        <authorList>
            <person name="Chistoserdov A.Y."/>
            <person name="Chistoserdova L.V."/>
            <person name="McIntire W.S."/>
            <person name="Lidstrom M.E."/>
        </authorList>
    </citation>
    <scope>NUCLEOTIDE SEQUENCE [GENOMIC DNA]</scope>
</reference>
<reference key="2">
    <citation type="journal article" date="2009" name="PLoS ONE">
        <title>Methylobacterium genome sequences: a reference blueprint to investigate microbial metabolism of C1 compounds from natural and industrial sources.</title>
        <authorList>
            <person name="Vuilleumier S."/>
            <person name="Chistoserdova L."/>
            <person name="Lee M.-C."/>
            <person name="Bringel F."/>
            <person name="Lajus A."/>
            <person name="Zhou Y."/>
            <person name="Gourion B."/>
            <person name="Barbe V."/>
            <person name="Chang J."/>
            <person name="Cruveiller S."/>
            <person name="Dossat C."/>
            <person name="Gillett W."/>
            <person name="Gruffaz C."/>
            <person name="Haugen E."/>
            <person name="Hourcade E."/>
            <person name="Levy R."/>
            <person name="Mangenot S."/>
            <person name="Muller E."/>
            <person name="Nadalig T."/>
            <person name="Pagni M."/>
            <person name="Penny C."/>
            <person name="Peyraud R."/>
            <person name="Robinson D.G."/>
            <person name="Roche D."/>
            <person name="Rouy Z."/>
            <person name="Saenampechek C."/>
            <person name="Salvignol G."/>
            <person name="Vallenet D."/>
            <person name="Wu Z."/>
            <person name="Marx C.J."/>
            <person name="Vorholt J.A."/>
            <person name="Olson M.V."/>
            <person name="Kaul R."/>
            <person name="Weissenbach J."/>
            <person name="Medigue C."/>
            <person name="Lidstrom M.E."/>
        </authorList>
    </citation>
    <scope>NUCLEOTIDE SEQUENCE [LARGE SCALE GENOMIC DNA]</scope>
    <source>
        <strain>ATCC 14718 / DSM 1338 / JCM 2805 / NCIMB 9133 / AM1</strain>
    </source>
</reference>
<proteinExistence type="inferred from homology"/>
<name>DHMH_METEA</name>
<accession>Q49124</accession>
<accession>C5ATK4</accession>
<sequence length="410" mass="44504">MTHAYTKVRQALCYGSATLGAAALAALIAAGSAAAAESHGVATAKAAAADLAAGKADDPVVLKAAPINARRVFVYDPKHFAAISQFYMIDGDTARVVGTADGGFLSNPVVASDGSFFGQASTVYERIARGKRTDYVELLDPQTNNPIADIELPNSPRFLVGTYPWMTALTPNNKTLLFYQFSPQPAVGVVDLAGKKFDRMIEVPDCYHIFPSSNDTFFMHCRDGSLLKVGIGADGKSQTKRTEIFHKENEYLINHPAYSPKSGRLVWPTYTGKIFQIDLSSQDAKFLPAIEAFTDAEKKEGWAPGGWQQVAYHRESDRIFLLGDQRAASKHKAPSRFLFVIDAKTGKRINKIELKHEIDSVGVSQDAKPQLYALSTGDKALYIFDPETGKEVSSVNQLGAGPQVVMTSDM</sequence>
<evidence type="ECO:0000255" key="1"/>
<evidence type="ECO:0000305" key="2"/>
<protein>
    <recommendedName>
        <fullName>Methylamine dehydrogenase heavy chain</fullName>
        <shortName>MADH</shortName>
        <ecNumber>1.4.9.1</ecNumber>
    </recommendedName>
    <alternativeName>
        <fullName>Methylamine dehydrogenase (amicyanin)</fullName>
    </alternativeName>
</protein>
<dbReference type="EC" id="1.4.9.1"/>
<dbReference type="EMBL" id="L26406">
    <property type="protein sequence ID" value="AAB46933.1"/>
    <property type="status" value="ALT_INIT"/>
    <property type="molecule type" value="Genomic_DNA"/>
</dbReference>
<dbReference type="EMBL" id="CP001510">
    <property type="protein sequence ID" value="ACS40528.1"/>
    <property type="molecule type" value="Genomic_DNA"/>
</dbReference>
<dbReference type="RefSeq" id="WP_012753043.1">
    <property type="nucleotide sequence ID" value="NC_012808.1"/>
</dbReference>
<dbReference type="SMR" id="Q49124"/>
<dbReference type="STRING" id="272630.MexAM1_META1p2770"/>
<dbReference type="KEGG" id="mea:Mex_1p2770"/>
<dbReference type="eggNOG" id="COG3391">
    <property type="taxonomic scope" value="Bacteria"/>
</dbReference>
<dbReference type="HOGENOM" id="CLU_059384_0_0_5"/>
<dbReference type="OrthoDB" id="7209000at2"/>
<dbReference type="BioCyc" id="MetaCyc:MONOMER-3905"/>
<dbReference type="Proteomes" id="UP000009081">
    <property type="component" value="Chromosome"/>
</dbReference>
<dbReference type="GO" id="GO:0042597">
    <property type="term" value="C:periplasmic space"/>
    <property type="evidence" value="ECO:0007669"/>
    <property type="project" value="UniProtKB-SubCell"/>
</dbReference>
<dbReference type="GO" id="GO:0030058">
    <property type="term" value="F:aliphatic amine dehydrogenase activity"/>
    <property type="evidence" value="ECO:0007669"/>
    <property type="project" value="InterPro"/>
</dbReference>
<dbReference type="GO" id="GO:0052876">
    <property type="term" value="F:methylamine dehydrogenase (amicyanin) activity"/>
    <property type="evidence" value="ECO:0007669"/>
    <property type="project" value="UniProtKB-EC"/>
</dbReference>
<dbReference type="GO" id="GO:0030416">
    <property type="term" value="P:methylamine metabolic process"/>
    <property type="evidence" value="ECO:0007669"/>
    <property type="project" value="InterPro"/>
</dbReference>
<dbReference type="Gene3D" id="2.130.10.10">
    <property type="entry name" value="YVTN repeat-like/Quinoprotein amine dehydrogenase"/>
    <property type="match status" value="1"/>
</dbReference>
<dbReference type="InterPro" id="IPR013476">
    <property type="entry name" value="MeN_DH_Hvc"/>
</dbReference>
<dbReference type="InterPro" id="IPR009451">
    <property type="entry name" value="Metamine_DH_Hvc"/>
</dbReference>
<dbReference type="InterPro" id="IPR011044">
    <property type="entry name" value="Quino_amine_DH_bsu"/>
</dbReference>
<dbReference type="InterPro" id="IPR015943">
    <property type="entry name" value="WD40/YVTN_repeat-like_dom_sf"/>
</dbReference>
<dbReference type="NCBIfam" id="TIGR02658">
    <property type="entry name" value="TTQ_MADH_Hv"/>
    <property type="match status" value="1"/>
</dbReference>
<dbReference type="Pfam" id="PF06433">
    <property type="entry name" value="Me-amine-dh_H"/>
    <property type="match status" value="1"/>
</dbReference>
<dbReference type="SUPFAM" id="SSF50969">
    <property type="entry name" value="YVTN repeat-like/Quinoprotein amine dehydrogenase"/>
    <property type="match status" value="1"/>
</dbReference>
<feature type="signal peptide" evidence="1">
    <location>
        <begin position="1"/>
        <end position="35"/>
    </location>
</feature>
<feature type="chain" id="PRO_0000025577" description="Methylamine dehydrogenase heavy chain">
    <location>
        <begin position="36"/>
        <end position="410"/>
    </location>
</feature>
<gene>
    <name type="primary">mauB</name>
    <name type="ordered locus">MexAM1_META1p2770</name>
</gene>
<organism>
    <name type="scientific">Methylorubrum extorquens (strain ATCC 14718 / DSM 1338 / JCM 2805 / NCIMB 9133 / AM1)</name>
    <name type="common">Methylobacterium extorquens</name>
    <dbReference type="NCBI Taxonomy" id="272630"/>
    <lineage>
        <taxon>Bacteria</taxon>
        <taxon>Pseudomonadati</taxon>
        <taxon>Pseudomonadota</taxon>
        <taxon>Alphaproteobacteria</taxon>
        <taxon>Hyphomicrobiales</taxon>
        <taxon>Methylobacteriaceae</taxon>
        <taxon>Methylorubrum</taxon>
    </lineage>
</organism>